<protein>
    <recommendedName>
        <fullName evidence="1">ATP phosphoribosyltransferase</fullName>
        <shortName evidence="1">ATP-PRT</shortName>
        <shortName evidence="1">ATP-PRTase</shortName>
        <ecNumber evidence="1">2.4.2.17</ecNumber>
    </recommendedName>
</protein>
<feature type="chain" id="PRO_0000151890" description="ATP phosphoribosyltransferase">
    <location>
        <begin position="1"/>
        <end position="285"/>
    </location>
</feature>
<gene>
    <name evidence="1" type="primary">hisG</name>
    <name type="ordered locus">STK_14590</name>
</gene>
<reference key="1">
    <citation type="journal article" date="2001" name="DNA Res.">
        <title>Complete genome sequence of an aerobic thermoacidophilic Crenarchaeon, Sulfolobus tokodaii strain7.</title>
        <authorList>
            <person name="Kawarabayasi Y."/>
            <person name="Hino Y."/>
            <person name="Horikawa H."/>
            <person name="Jin-no K."/>
            <person name="Takahashi M."/>
            <person name="Sekine M."/>
            <person name="Baba S."/>
            <person name="Ankai A."/>
            <person name="Kosugi H."/>
            <person name="Hosoyama A."/>
            <person name="Fukui S."/>
            <person name="Nagai Y."/>
            <person name="Nishijima K."/>
            <person name="Otsuka R."/>
            <person name="Nakazawa H."/>
            <person name="Takamiya M."/>
            <person name="Kato Y."/>
            <person name="Yoshizawa T."/>
            <person name="Tanaka T."/>
            <person name="Kudoh Y."/>
            <person name="Yamazaki J."/>
            <person name="Kushida N."/>
            <person name="Oguchi A."/>
            <person name="Aoki K."/>
            <person name="Masuda S."/>
            <person name="Yanagii M."/>
            <person name="Nishimura M."/>
            <person name="Yamagishi A."/>
            <person name="Oshima T."/>
            <person name="Kikuchi H."/>
        </authorList>
    </citation>
    <scope>NUCLEOTIDE SEQUENCE [LARGE SCALE GENOMIC DNA]</scope>
    <source>
        <strain>DSM 16993 / JCM 10545 / NBRC 100140 / 7</strain>
    </source>
</reference>
<accession>Q970Z3</accession>
<accession>F9VNE2</accession>
<comment type="function">
    <text evidence="1">Catalyzes the condensation of ATP and 5-phosphoribose 1-diphosphate to form N'-(5'-phosphoribosyl)-ATP (PR-ATP). Has a crucial role in the pathway because the rate of histidine biosynthesis seems to be controlled primarily by regulation of HisG enzymatic activity.</text>
</comment>
<comment type="catalytic activity">
    <reaction evidence="1">
        <text>1-(5-phospho-beta-D-ribosyl)-ATP + diphosphate = 5-phospho-alpha-D-ribose 1-diphosphate + ATP</text>
        <dbReference type="Rhea" id="RHEA:18473"/>
        <dbReference type="ChEBI" id="CHEBI:30616"/>
        <dbReference type="ChEBI" id="CHEBI:33019"/>
        <dbReference type="ChEBI" id="CHEBI:58017"/>
        <dbReference type="ChEBI" id="CHEBI:73183"/>
        <dbReference type="EC" id="2.4.2.17"/>
    </reaction>
</comment>
<comment type="cofactor">
    <cofactor evidence="1">
        <name>Mg(2+)</name>
        <dbReference type="ChEBI" id="CHEBI:18420"/>
    </cofactor>
</comment>
<comment type="activity regulation">
    <text evidence="1">Feedback inhibited by histidine.</text>
</comment>
<comment type="pathway">
    <text evidence="1">Amino-acid biosynthesis; L-histidine biosynthesis; L-histidine from 5-phospho-alpha-D-ribose 1-diphosphate: step 1/9.</text>
</comment>
<comment type="subcellular location">
    <subcellularLocation>
        <location evidence="1">Cytoplasm</location>
    </subcellularLocation>
</comment>
<comment type="similarity">
    <text evidence="1">Belongs to the ATP phosphoribosyltransferase family. Long subfamily.</text>
</comment>
<evidence type="ECO:0000255" key="1">
    <source>
        <dbReference type="HAMAP-Rule" id="MF_00079"/>
    </source>
</evidence>
<dbReference type="EC" id="2.4.2.17" evidence="1"/>
<dbReference type="EMBL" id="BA000023">
    <property type="protein sequence ID" value="BAK54588.1"/>
    <property type="molecule type" value="Genomic_DNA"/>
</dbReference>
<dbReference type="RefSeq" id="WP_052846572.1">
    <property type="nucleotide sequence ID" value="NC_003106.2"/>
</dbReference>
<dbReference type="SMR" id="Q970Z3"/>
<dbReference type="STRING" id="273063.STK_14590"/>
<dbReference type="GeneID" id="1459494"/>
<dbReference type="KEGG" id="sto:STK_14590"/>
<dbReference type="PATRIC" id="fig|273063.9.peg.1665"/>
<dbReference type="eggNOG" id="arCOG02208">
    <property type="taxonomic scope" value="Archaea"/>
</dbReference>
<dbReference type="OrthoDB" id="33116at2157"/>
<dbReference type="UniPathway" id="UPA00031">
    <property type="reaction ID" value="UER00006"/>
</dbReference>
<dbReference type="Proteomes" id="UP000001015">
    <property type="component" value="Chromosome"/>
</dbReference>
<dbReference type="GO" id="GO:0005737">
    <property type="term" value="C:cytoplasm"/>
    <property type="evidence" value="ECO:0007669"/>
    <property type="project" value="UniProtKB-SubCell"/>
</dbReference>
<dbReference type="GO" id="GO:0005524">
    <property type="term" value="F:ATP binding"/>
    <property type="evidence" value="ECO:0007669"/>
    <property type="project" value="UniProtKB-KW"/>
</dbReference>
<dbReference type="GO" id="GO:0003879">
    <property type="term" value="F:ATP phosphoribosyltransferase activity"/>
    <property type="evidence" value="ECO:0007669"/>
    <property type="project" value="UniProtKB-UniRule"/>
</dbReference>
<dbReference type="GO" id="GO:0000287">
    <property type="term" value="F:magnesium ion binding"/>
    <property type="evidence" value="ECO:0007669"/>
    <property type="project" value="UniProtKB-UniRule"/>
</dbReference>
<dbReference type="GO" id="GO:0000105">
    <property type="term" value="P:L-histidine biosynthetic process"/>
    <property type="evidence" value="ECO:0007669"/>
    <property type="project" value="UniProtKB-UniRule"/>
</dbReference>
<dbReference type="CDD" id="cd13594">
    <property type="entry name" value="PBP2_HisGL4"/>
    <property type="match status" value="1"/>
</dbReference>
<dbReference type="FunFam" id="3.30.70.120:FF:000002">
    <property type="entry name" value="ATP phosphoribosyltransferase"/>
    <property type="match status" value="1"/>
</dbReference>
<dbReference type="FunFam" id="3.40.190.10:FF:000008">
    <property type="entry name" value="ATP phosphoribosyltransferase"/>
    <property type="match status" value="1"/>
</dbReference>
<dbReference type="Gene3D" id="3.30.70.120">
    <property type="match status" value="1"/>
</dbReference>
<dbReference type="Gene3D" id="3.40.190.10">
    <property type="entry name" value="Periplasmic binding protein-like II"/>
    <property type="match status" value="2"/>
</dbReference>
<dbReference type="HAMAP" id="MF_00079">
    <property type="entry name" value="HisG_Long"/>
    <property type="match status" value="1"/>
</dbReference>
<dbReference type="InterPro" id="IPR020621">
    <property type="entry name" value="ATP-PRT_HisG_long"/>
</dbReference>
<dbReference type="InterPro" id="IPR013820">
    <property type="entry name" value="ATP_PRibTrfase_cat"/>
</dbReference>
<dbReference type="InterPro" id="IPR018198">
    <property type="entry name" value="ATP_PRibTrfase_CS"/>
</dbReference>
<dbReference type="InterPro" id="IPR001348">
    <property type="entry name" value="ATP_PRibTrfase_HisG"/>
</dbReference>
<dbReference type="InterPro" id="IPR013115">
    <property type="entry name" value="HisG_C"/>
</dbReference>
<dbReference type="InterPro" id="IPR011322">
    <property type="entry name" value="N-reg_PII-like_a/b"/>
</dbReference>
<dbReference type="InterPro" id="IPR015867">
    <property type="entry name" value="N-reg_PII/ATP_PRibTrfase_C"/>
</dbReference>
<dbReference type="NCBIfam" id="TIGR00070">
    <property type="entry name" value="hisG"/>
    <property type="match status" value="1"/>
</dbReference>
<dbReference type="NCBIfam" id="TIGR03455">
    <property type="entry name" value="HisG_C-term"/>
    <property type="match status" value="1"/>
</dbReference>
<dbReference type="PANTHER" id="PTHR21403:SF10">
    <property type="entry name" value="ATP PHOSPHORIBOSYLTRANSFERASE"/>
    <property type="match status" value="1"/>
</dbReference>
<dbReference type="PANTHER" id="PTHR21403">
    <property type="entry name" value="ATP PHOSPHORIBOSYLTRANSFERASE ATP-PRTASE"/>
    <property type="match status" value="1"/>
</dbReference>
<dbReference type="Pfam" id="PF01634">
    <property type="entry name" value="HisG"/>
    <property type="match status" value="1"/>
</dbReference>
<dbReference type="Pfam" id="PF08029">
    <property type="entry name" value="HisG_C"/>
    <property type="match status" value="1"/>
</dbReference>
<dbReference type="SUPFAM" id="SSF54913">
    <property type="entry name" value="GlnB-like"/>
    <property type="match status" value="1"/>
</dbReference>
<dbReference type="SUPFAM" id="SSF53850">
    <property type="entry name" value="Periplasmic binding protein-like II"/>
    <property type="match status" value="1"/>
</dbReference>
<dbReference type="PROSITE" id="PS01316">
    <property type="entry name" value="ATP_P_PHORIBOSYLTR"/>
    <property type="match status" value="1"/>
</dbReference>
<sequence>MKMAIPNKGRLKDPVVQFLASVGVKGNFSDDRALIIPTNWEGVQLVMVRTEDIPSIVESGAAELGITGHDYVIESNSDVDELIRLDFGKSKIVLAVPVSWNIDRVEEIKDEIRIATKYYNIAKQYLEKKNIKAKIVKISGAAEVMPSLGAADAIIDVMSTGTTLKLHGLKPLDTILESSAVVIANRNWVKSEEADKINLLLTMMKGALMARNKKMIFMNVPDDKLDKVIASLPAMLSPTLSKLAKSDAWEVITVVDEDLIPEVIAKVKANGARDIVVVNIEKVVK</sequence>
<name>HIS1_SULTO</name>
<proteinExistence type="inferred from homology"/>
<keyword id="KW-0028">Amino-acid biosynthesis</keyword>
<keyword id="KW-0067">ATP-binding</keyword>
<keyword id="KW-0963">Cytoplasm</keyword>
<keyword id="KW-0328">Glycosyltransferase</keyword>
<keyword id="KW-0368">Histidine biosynthesis</keyword>
<keyword id="KW-0460">Magnesium</keyword>
<keyword id="KW-0479">Metal-binding</keyword>
<keyword id="KW-0547">Nucleotide-binding</keyword>
<keyword id="KW-1185">Reference proteome</keyword>
<keyword id="KW-0808">Transferase</keyword>
<organism>
    <name type="scientific">Sulfurisphaera tokodaii (strain DSM 16993 / JCM 10545 / NBRC 100140 / 7)</name>
    <name type="common">Sulfolobus tokodaii</name>
    <dbReference type="NCBI Taxonomy" id="273063"/>
    <lineage>
        <taxon>Archaea</taxon>
        <taxon>Thermoproteota</taxon>
        <taxon>Thermoprotei</taxon>
        <taxon>Sulfolobales</taxon>
        <taxon>Sulfolobaceae</taxon>
        <taxon>Sulfurisphaera</taxon>
    </lineage>
</organism>